<gene>
    <name evidence="1" type="primary">der</name>
    <name type="synonym">engA</name>
    <name type="ordered locus">lin2051</name>
</gene>
<protein>
    <recommendedName>
        <fullName evidence="1">GTPase Der</fullName>
    </recommendedName>
    <alternativeName>
        <fullName evidence="1">GTP-binding protein EngA</fullName>
    </alternativeName>
</protein>
<proteinExistence type="inferred from homology"/>
<accession>Q92A71</accession>
<sequence>MAKPVVAIVGRPNVGKSTIFNRIVGERVSIVEDVPGVTRDRIYNSAEWLGKEFNIIDTGGIDLSDEPFLEQIRAQAEIAIDEADVIIFITNGREGVTDADEQVAKILYRSNKPIVLAINKVDNPEMRDQIYDFYSLGFGEPYPISGSHGLGLGDMLDAVRAHFPKEEEEEYPDETVKFSLIGRPNVGKSSILNALLGEDRVIVSDIAGTTRDAIDTTYTFDGQDYVMIDTAGMRKRGKVYESTEKYSVLRAMRAIERSDVVLVVINAEEGIREQDKRIAGYAHDAGRAIIIVVNKWDAINKDEKTINVWTEDIREQFQFLSYAPIVFVSAKTKQRLNNLFPLINQVSDNHSLRVQSSMLNDVISDAVAMNPSPMDKGKRLKIFYTTQVAVKPPTFVVFVNDPELMHFSYERFLENRIREAFPFDGTPIRVIARKRK</sequence>
<reference key="1">
    <citation type="journal article" date="2001" name="Science">
        <title>Comparative genomics of Listeria species.</title>
        <authorList>
            <person name="Glaser P."/>
            <person name="Frangeul L."/>
            <person name="Buchrieser C."/>
            <person name="Rusniok C."/>
            <person name="Amend A."/>
            <person name="Baquero F."/>
            <person name="Berche P."/>
            <person name="Bloecker H."/>
            <person name="Brandt P."/>
            <person name="Chakraborty T."/>
            <person name="Charbit A."/>
            <person name="Chetouani F."/>
            <person name="Couve E."/>
            <person name="de Daruvar A."/>
            <person name="Dehoux P."/>
            <person name="Domann E."/>
            <person name="Dominguez-Bernal G."/>
            <person name="Duchaud E."/>
            <person name="Durant L."/>
            <person name="Dussurget O."/>
            <person name="Entian K.-D."/>
            <person name="Fsihi H."/>
            <person name="Garcia-del Portillo F."/>
            <person name="Garrido P."/>
            <person name="Gautier L."/>
            <person name="Goebel W."/>
            <person name="Gomez-Lopez N."/>
            <person name="Hain T."/>
            <person name="Hauf J."/>
            <person name="Jackson D."/>
            <person name="Jones L.-M."/>
            <person name="Kaerst U."/>
            <person name="Kreft J."/>
            <person name="Kuhn M."/>
            <person name="Kunst F."/>
            <person name="Kurapkat G."/>
            <person name="Madueno E."/>
            <person name="Maitournam A."/>
            <person name="Mata Vicente J."/>
            <person name="Ng E."/>
            <person name="Nedjari H."/>
            <person name="Nordsiek G."/>
            <person name="Novella S."/>
            <person name="de Pablos B."/>
            <person name="Perez-Diaz J.-C."/>
            <person name="Purcell R."/>
            <person name="Remmel B."/>
            <person name="Rose M."/>
            <person name="Schlueter T."/>
            <person name="Simoes N."/>
            <person name="Tierrez A."/>
            <person name="Vazquez-Boland J.-A."/>
            <person name="Voss H."/>
            <person name="Wehland J."/>
            <person name="Cossart P."/>
        </authorList>
    </citation>
    <scope>NUCLEOTIDE SEQUENCE [LARGE SCALE GENOMIC DNA]</scope>
    <source>
        <strain>ATCC BAA-680 / CLIP 11262</strain>
    </source>
</reference>
<feature type="chain" id="PRO_0000179008" description="GTPase Der">
    <location>
        <begin position="1"/>
        <end position="436"/>
    </location>
</feature>
<feature type="domain" description="EngA-type G 1">
    <location>
        <begin position="4"/>
        <end position="167"/>
    </location>
</feature>
<feature type="domain" description="EngA-type G 2">
    <location>
        <begin position="176"/>
        <end position="351"/>
    </location>
</feature>
<feature type="domain" description="KH-like" evidence="1">
    <location>
        <begin position="352"/>
        <end position="436"/>
    </location>
</feature>
<feature type="binding site" evidence="1">
    <location>
        <begin position="10"/>
        <end position="17"/>
    </location>
    <ligand>
        <name>GTP</name>
        <dbReference type="ChEBI" id="CHEBI:37565"/>
        <label>1</label>
    </ligand>
</feature>
<feature type="binding site" evidence="1">
    <location>
        <begin position="57"/>
        <end position="61"/>
    </location>
    <ligand>
        <name>GTP</name>
        <dbReference type="ChEBI" id="CHEBI:37565"/>
        <label>1</label>
    </ligand>
</feature>
<feature type="binding site" evidence="1">
    <location>
        <begin position="119"/>
        <end position="122"/>
    </location>
    <ligand>
        <name>GTP</name>
        <dbReference type="ChEBI" id="CHEBI:37565"/>
        <label>1</label>
    </ligand>
</feature>
<feature type="binding site" evidence="1">
    <location>
        <begin position="182"/>
        <end position="189"/>
    </location>
    <ligand>
        <name>GTP</name>
        <dbReference type="ChEBI" id="CHEBI:37565"/>
        <label>2</label>
    </ligand>
</feature>
<feature type="binding site" evidence="1">
    <location>
        <begin position="229"/>
        <end position="233"/>
    </location>
    <ligand>
        <name>GTP</name>
        <dbReference type="ChEBI" id="CHEBI:37565"/>
        <label>2</label>
    </ligand>
</feature>
<feature type="binding site" evidence="1">
    <location>
        <begin position="294"/>
        <end position="297"/>
    </location>
    <ligand>
        <name>GTP</name>
        <dbReference type="ChEBI" id="CHEBI:37565"/>
        <label>2</label>
    </ligand>
</feature>
<keyword id="KW-0342">GTP-binding</keyword>
<keyword id="KW-0547">Nucleotide-binding</keyword>
<keyword id="KW-0677">Repeat</keyword>
<keyword id="KW-0690">Ribosome biogenesis</keyword>
<comment type="function">
    <text evidence="1">GTPase that plays an essential role in the late steps of ribosome biogenesis.</text>
</comment>
<comment type="subunit">
    <text evidence="1">Associates with the 50S ribosomal subunit.</text>
</comment>
<comment type="similarity">
    <text evidence="1">Belongs to the TRAFAC class TrmE-Era-EngA-EngB-Septin-like GTPase superfamily. EngA (Der) GTPase family.</text>
</comment>
<dbReference type="EMBL" id="AL596170">
    <property type="protein sequence ID" value="CAC97281.1"/>
    <property type="molecule type" value="Genomic_DNA"/>
</dbReference>
<dbReference type="PIR" id="AI1688">
    <property type="entry name" value="AI1688"/>
</dbReference>
<dbReference type="RefSeq" id="WP_003769459.1">
    <property type="nucleotide sequence ID" value="NC_003212.1"/>
</dbReference>
<dbReference type="SMR" id="Q92A71"/>
<dbReference type="STRING" id="272626.gene:17566409"/>
<dbReference type="GeneID" id="93235390"/>
<dbReference type="KEGG" id="lin:lin2051"/>
<dbReference type="eggNOG" id="COG1160">
    <property type="taxonomic scope" value="Bacteria"/>
</dbReference>
<dbReference type="HOGENOM" id="CLU_016077_6_2_9"/>
<dbReference type="OrthoDB" id="9805918at2"/>
<dbReference type="Proteomes" id="UP000002513">
    <property type="component" value="Chromosome"/>
</dbReference>
<dbReference type="GO" id="GO:0005525">
    <property type="term" value="F:GTP binding"/>
    <property type="evidence" value="ECO:0007669"/>
    <property type="project" value="UniProtKB-UniRule"/>
</dbReference>
<dbReference type="GO" id="GO:0043022">
    <property type="term" value="F:ribosome binding"/>
    <property type="evidence" value="ECO:0007669"/>
    <property type="project" value="TreeGrafter"/>
</dbReference>
<dbReference type="GO" id="GO:0042254">
    <property type="term" value="P:ribosome biogenesis"/>
    <property type="evidence" value="ECO:0007669"/>
    <property type="project" value="UniProtKB-KW"/>
</dbReference>
<dbReference type="CDD" id="cd01894">
    <property type="entry name" value="EngA1"/>
    <property type="match status" value="1"/>
</dbReference>
<dbReference type="CDD" id="cd01895">
    <property type="entry name" value="EngA2"/>
    <property type="match status" value="1"/>
</dbReference>
<dbReference type="FunFam" id="3.30.300.20:FF:000004">
    <property type="entry name" value="GTPase Der"/>
    <property type="match status" value="1"/>
</dbReference>
<dbReference type="FunFam" id="3.40.50.300:FF:000040">
    <property type="entry name" value="GTPase Der"/>
    <property type="match status" value="1"/>
</dbReference>
<dbReference type="FunFam" id="3.40.50.300:FF:000057">
    <property type="entry name" value="GTPase Der"/>
    <property type="match status" value="1"/>
</dbReference>
<dbReference type="Gene3D" id="3.30.300.20">
    <property type="match status" value="1"/>
</dbReference>
<dbReference type="Gene3D" id="3.40.50.300">
    <property type="entry name" value="P-loop containing nucleotide triphosphate hydrolases"/>
    <property type="match status" value="2"/>
</dbReference>
<dbReference type="HAMAP" id="MF_00195">
    <property type="entry name" value="GTPase_Der"/>
    <property type="match status" value="1"/>
</dbReference>
<dbReference type="InterPro" id="IPR031166">
    <property type="entry name" value="G_ENGA"/>
</dbReference>
<dbReference type="InterPro" id="IPR006073">
    <property type="entry name" value="GTP-bd"/>
</dbReference>
<dbReference type="InterPro" id="IPR016484">
    <property type="entry name" value="GTPase_Der"/>
</dbReference>
<dbReference type="InterPro" id="IPR032859">
    <property type="entry name" value="KH_dom-like"/>
</dbReference>
<dbReference type="InterPro" id="IPR015946">
    <property type="entry name" value="KH_dom-like_a/b"/>
</dbReference>
<dbReference type="InterPro" id="IPR027417">
    <property type="entry name" value="P-loop_NTPase"/>
</dbReference>
<dbReference type="InterPro" id="IPR005225">
    <property type="entry name" value="Small_GTP-bd"/>
</dbReference>
<dbReference type="NCBIfam" id="TIGR03594">
    <property type="entry name" value="GTPase_EngA"/>
    <property type="match status" value="1"/>
</dbReference>
<dbReference type="NCBIfam" id="TIGR00231">
    <property type="entry name" value="small_GTP"/>
    <property type="match status" value="2"/>
</dbReference>
<dbReference type="PANTHER" id="PTHR43834">
    <property type="entry name" value="GTPASE DER"/>
    <property type="match status" value="1"/>
</dbReference>
<dbReference type="PANTHER" id="PTHR43834:SF6">
    <property type="entry name" value="GTPASE DER"/>
    <property type="match status" value="1"/>
</dbReference>
<dbReference type="Pfam" id="PF14714">
    <property type="entry name" value="KH_dom-like"/>
    <property type="match status" value="1"/>
</dbReference>
<dbReference type="Pfam" id="PF01926">
    <property type="entry name" value="MMR_HSR1"/>
    <property type="match status" value="2"/>
</dbReference>
<dbReference type="PIRSF" id="PIRSF006485">
    <property type="entry name" value="GTP-binding_EngA"/>
    <property type="match status" value="1"/>
</dbReference>
<dbReference type="PRINTS" id="PR00326">
    <property type="entry name" value="GTP1OBG"/>
</dbReference>
<dbReference type="SUPFAM" id="SSF52540">
    <property type="entry name" value="P-loop containing nucleoside triphosphate hydrolases"/>
    <property type="match status" value="2"/>
</dbReference>
<dbReference type="PROSITE" id="PS51712">
    <property type="entry name" value="G_ENGA"/>
    <property type="match status" value="2"/>
</dbReference>
<evidence type="ECO:0000255" key="1">
    <source>
        <dbReference type="HAMAP-Rule" id="MF_00195"/>
    </source>
</evidence>
<organism>
    <name type="scientific">Listeria innocua serovar 6a (strain ATCC BAA-680 / CLIP 11262)</name>
    <dbReference type="NCBI Taxonomy" id="272626"/>
    <lineage>
        <taxon>Bacteria</taxon>
        <taxon>Bacillati</taxon>
        <taxon>Bacillota</taxon>
        <taxon>Bacilli</taxon>
        <taxon>Bacillales</taxon>
        <taxon>Listeriaceae</taxon>
        <taxon>Listeria</taxon>
    </lineage>
</organism>
<name>DER_LISIN</name>